<organism>
    <name type="scientific">Bacillus subtilis (strain 168)</name>
    <dbReference type="NCBI Taxonomy" id="224308"/>
    <lineage>
        <taxon>Bacteria</taxon>
        <taxon>Bacillati</taxon>
        <taxon>Bacillota</taxon>
        <taxon>Bacilli</taxon>
        <taxon>Bacillales</taxon>
        <taxon>Bacillaceae</taxon>
        <taxon>Bacillus</taxon>
    </lineage>
</organism>
<name>OAT_BACSU</name>
<feature type="chain" id="PRO_0000120503" description="Ornithine aminotransferase">
    <location>
        <begin position="1"/>
        <end position="401"/>
    </location>
</feature>
<feature type="modified residue" description="N6-(pyridoxal phosphate)lysine" evidence="5">
    <location>
        <position position="258"/>
    </location>
</feature>
<sequence>MTALSKSKEIIDQTSHYGANNYHPLPIVISEALGAWVKDPEGNEYMDMLSAYSAVNQGHRHPKIIQALKDQADKITLTSRAFHNDQLGPFYEKTAKLTGKEMILPMNTGAEAVESAVKAARRWAYEVKGVADNQAEIIACVGNFHGRTMLAVSLSSEEEYKRGFGPMLPGIKLIPYGDVEALRQAITPNTAAFLFEPIQGEAGIVIPPEGFLQEAAAICKEENVLFIADEIQTGLGRTGKTFACDWDGIVPDMYILGKALGGGVFPISCIAADREILGVFNPGSHGSTFGGNPLACAVSIASLEVLEDEKLADRSLELGEYFKSELESIDSPVIKEVRGRGLFIGVELTEAARPYCERLKEEGLLCKETHDTVIRFAPPLIISKEDLDWAIEKIKHVLRNA</sequence>
<accession>P38021</accession>
<keyword id="KW-0028">Amino-acid biosynthesis</keyword>
<keyword id="KW-0032">Aminotransferase</keyword>
<keyword id="KW-0056">Arginine metabolism</keyword>
<keyword id="KW-0963">Cytoplasm</keyword>
<keyword id="KW-0641">Proline biosynthesis</keyword>
<keyword id="KW-0663">Pyridoxal phosphate</keyword>
<keyword id="KW-1185">Reference proteome</keyword>
<keyword id="KW-0808">Transferase</keyword>
<evidence type="ECO:0000250" key="1"/>
<evidence type="ECO:0000269" key="2">
    <source>
    </source>
</evidence>
<evidence type="ECO:0000269" key="3">
    <source>
    </source>
</evidence>
<evidence type="ECO:0000303" key="4">
    <source>
    </source>
</evidence>
<evidence type="ECO:0000305" key="5"/>
<comment type="function">
    <text evidence="3">Catalyzes the interconversion of ornithine to glutamate semialdehyde.</text>
</comment>
<comment type="catalytic activity">
    <reaction evidence="3">
        <text>a 2-oxocarboxylate + L-ornithine = L-glutamate 5-semialdehyde + an L-alpha-amino acid</text>
        <dbReference type="Rhea" id="RHEA:13877"/>
        <dbReference type="ChEBI" id="CHEBI:35179"/>
        <dbReference type="ChEBI" id="CHEBI:46911"/>
        <dbReference type="ChEBI" id="CHEBI:58066"/>
        <dbReference type="ChEBI" id="CHEBI:59869"/>
        <dbReference type="EC" id="2.6.1.13"/>
    </reaction>
</comment>
<comment type="cofactor">
    <cofactor evidence="5">
        <name>pyridoxal 5'-phosphate</name>
        <dbReference type="ChEBI" id="CHEBI:597326"/>
    </cofactor>
</comment>
<comment type="pathway">
    <text>Amino-acid biosynthesis; L-proline biosynthesis; L-glutamate 5-semialdehyde from L-ornithine: step 1/1.</text>
</comment>
<comment type="subcellular location">
    <subcellularLocation>
        <location evidence="1">Cytoplasm</location>
    </subcellularLocation>
</comment>
<comment type="induction">
    <text evidence="2 3">Part of the rocDEF operon. Expression is sigma L dependent, induced by arginine, ornithine, ctirulline or proline. Ammonium and glutamine strongly repress induction of the rocD by proline, and only glutamine represses weakly induction by arginine.</text>
</comment>
<comment type="disruption phenotype">
    <text evidence="3">Cells lacking this gene do not grow in minimal medium containing either arginine or ornithine as sole nitrogen source.</text>
</comment>
<comment type="similarity">
    <text evidence="5">Belongs to the class-III pyridoxal-phosphate-dependent aminotransferase family. OAT subfamily.</text>
</comment>
<gene>
    <name evidence="4" type="primary">rocD</name>
    <name type="ordered locus">BSU40340</name>
</gene>
<proteinExistence type="evidence at protein level"/>
<dbReference type="EC" id="2.6.1.13" evidence="3"/>
<dbReference type="EMBL" id="X81802">
    <property type="protein sequence ID" value="CAA57398.1"/>
    <property type="molecule type" value="Genomic_DNA"/>
</dbReference>
<dbReference type="EMBL" id="D78193">
    <property type="protein sequence ID" value="BAA11293.1"/>
    <property type="molecule type" value="Genomic_DNA"/>
</dbReference>
<dbReference type="EMBL" id="AL009126">
    <property type="protein sequence ID" value="CAB16071.1"/>
    <property type="molecule type" value="Genomic_DNA"/>
</dbReference>
<dbReference type="EMBL" id="L22006">
    <property type="protein sequence ID" value="AAA19791.1"/>
    <property type="molecule type" value="Unassigned_DNA"/>
</dbReference>
<dbReference type="PIR" id="S55793">
    <property type="entry name" value="S55793"/>
</dbReference>
<dbReference type="RefSeq" id="NP_391914.1">
    <property type="nucleotide sequence ID" value="NC_000964.3"/>
</dbReference>
<dbReference type="RefSeq" id="WP_003242970.1">
    <property type="nucleotide sequence ID" value="NZ_OZ025638.1"/>
</dbReference>
<dbReference type="SMR" id="P38021"/>
<dbReference type="FunCoup" id="P38021">
    <property type="interactions" value="436"/>
</dbReference>
<dbReference type="STRING" id="224308.BSU40340"/>
<dbReference type="jPOST" id="P38021"/>
<dbReference type="PaxDb" id="224308-BSU40340"/>
<dbReference type="EnsemblBacteria" id="CAB16071">
    <property type="protein sequence ID" value="CAB16071"/>
    <property type="gene ID" value="BSU_40340"/>
</dbReference>
<dbReference type="GeneID" id="937755"/>
<dbReference type="KEGG" id="bsu:BSU40340"/>
<dbReference type="PATRIC" id="fig|224308.179.peg.4364"/>
<dbReference type="eggNOG" id="COG4992">
    <property type="taxonomic scope" value="Bacteria"/>
</dbReference>
<dbReference type="InParanoid" id="P38021"/>
<dbReference type="OrthoDB" id="9807885at2"/>
<dbReference type="PhylomeDB" id="P38021"/>
<dbReference type="BioCyc" id="BSUB:BSU40340-MONOMER"/>
<dbReference type="UniPathway" id="UPA00098">
    <property type="reaction ID" value="UER00358"/>
</dbReference>
<dbReference type="Proteomes" id="UP000001570">
    <property type="component" value="Chromosome"/>
</dbReference>
<dbReference type="GO" id="GO:0005737">
    <property type="term" value="C:cytoplasm"/>
    <property type="evidence" value="ECO:0007669"/>
    <property type="project" value="UniProtKB-SubCell"/>
</dbReference>
<dbReference type="GO" id="GO:0042802">
    <property type="term" value="F:identical protein binding"/>
    <property type="evidence" value="ECO:0000318"/>
    <property type="project" value="GO_Central"/>
</dbReference>
<dbReference type="GO" id="GO:0004587">
    <property type="term" value="F:ornithine aminotransferase activity"/>
    <property type="evidence" value="ECO:0000314"/>
    <property type="project" value="UniProtKB"/>
</dbReference>
<dbReference type="GO" id="GO:0030170">
    <property type="term" value="F:pyridoxal phosphate binding"/>
    <property type="evidence" value="ECO:0000318"/>
    <property type="project" value="GO_Central"/>
</dbReference>
<dbReference type="GO" id="GO:0006525">
    <property type="term" value="P:arginine metabolic process"/>
    <property type="evidence" value="ECO:0000314"/>
    <property type="project" value="UniProtKB"/>
</dbReference>
<dbReference type="GO" id="GO:0055129">
    <property type="term" value="P:L-proline biosynthetic process"/>
    <property type="evidence" value="ECO:0007669"/>
    <property type="project" value="UniProtKB-UniRule"/>
</dbReference>
<dbReference type="CDD" id="cd00610">
    <property type="entry name" value="OAT_like"/>
    <property type="match status" value="1"/>
</dbReference>
<dbReference type="FunFam" id="3.40.640.10:FF:000011">
    <property type="entry name" value="Ornithine aminotransferase"/>
    <property type="match status" value="1"/>
</dbReference>
<dbReference type="Gene3D" id="3.90.1150.10">
    <property type="entry name" value="Aspartate Aminotransferase, domain 1"/>
    <property type="match status" value="1"/>
</dbReference>
<dbReference type="Gene3D" id="3.40.640.10">
    <property type="entry name" value="Type I PLP-dependent aspartate aminotransferase-like (Major domain)"/>
    <property type="match status" value="1"/>
</dbReference>
<dbReference type="HAMAP" id="MF_01689">
    <property type="entry name" value="Ornith_aminotrans_3"/>
    <property type="match status" value="1"/>
</dbReference>
<dbReference type="InterPro" id="IPR005814">
    <property type="entry name" value="Aminotrans_3"/>
</dbReference>
<dbReference type="InterPro" id="IPR049704">
    <property type="entry name" value="Aminotrans_3_PPA_site"/>
</dbReference>
<dbReference type="InterPro" id="IPR050103">
    <property type="entry name" value="Class-III_PLP-dep_AT"/>
</dbReference>
<dbReference type="InterPro" id="IPR010164">
    <property type="entry name" value="Orn_aminotrans"/>
</dbReference>
<dbReference type="InterPro" id="IPR034757">
    <property type="entry name" value="Ornith_aminotrans_bact"/>
</dbReference>
<dbReference type="InterPro" id="IPR015424">
    <property type="entry name" value="PyrdxlP-dep_Trfase"/>
</dbReference>
<dbReference type="InterPro" id="IPR015421">
    <property type="entry name" value="PyrdxlP-dep_Trfase_major"/>
</dbReference>
<dbReference type="InterPro" id="IPR015422">
    <property type="entry name" value="PyrdxlP-dep_Trfase_small"/>
</dbReference>
<dbReference type="NCBIfam" id="TIGR01885">
    <property type="entry name" value="Orn_aminotrans"/>
    <property type="match status" value="1"/>
</dbReference>
<dbReference type="NCBIfam" id="NF003145">
    <property type="entry name" value="PRK04073.1"/>
    <property type="match status" value="1"/>
</dbReference>
<dbReference type="PANTHER" id="PTHR11986">
    <property type="entry name" value="AMINOTRANSFERASE CLASS III"/>
    <property type="match status" value="1"/>
</dbReference>
<dbReference type="PANTHER" id="PTHR11986:SF18">
    <property type="entry name" value="ORNITHINE AMINOTRANSFERASE, MITOCHONDRIAL"/>
    <property type="match status" value="1"/>
</dbReference>
<dbReference type="Pfam" id="PF00202">
    <property type="entry name" value="Aminotran_3"/>
    <property type="match status" value="1"/>
</dbReference>
<dbReference type="PIRSF" id="PIRSF000521">
    <property type="entry name" value="Transaminase_4ab_Lys_Orn"/>
    <property type="match status" value="1"/>
</dbReference>
<dbReference type="SUPFAM" id="SSF53383">
    <property type="entry name" value="PLP-dependent transferases"/>
    <property type="match status" value="1"/>
</dbReference>
<dbReference type="PROSITE" id="PS00600">
    <property type="entry name" value="AA_TRANSFER_CLASS_3"/>
    <property type="match status" value="1"/>
</dbReference>
<reference key="1">
    <citation type="journal article" date="1995" name="J. Mol. Biol.">
        <title>Expression of the rocDEF operon involved in arginine catabolism in Bacillus subtilis.</title>
        <authorList>
            <person name="Gardan R."/>
            <person name="Rapoport G."/>
            <person name="Debarbouille M."/>
        </authorList>
    </citation>
    <scope>NUCLEOTIDE SEQUENCE [GENOMIC DNA]</scope>
    <scope>FUNCTION AS AN ORNITHINE AMINOTRANSFERASE AND IN ARGININE CATABOLISM</scope>
    <scope>CATALYTIC ACTIVITY</scope>
    <scope>DISRUPTION PHENOTYPE</scope>
    <scope>INDUCTION</scope>
    <source>
        <strain>168</strain>
    </source>
</reference>
<reference key="2">
    <citation type="journal article" date="1997" name="DNA Res.">
        <title>Sequence analysis of the 36-kb region between gntZ and trnY genes of Bacillus subtilis genome.</title>
        <authorList>
            <person name="Kasahara Y."/>
            <person name="Nakai S."/>
            <person name="Ogasawara N."/>
        </authorList>
    </citation>
    <scope>NUCLEOTIDE SEQUENCE [GENOMIC DNA]</scope>
    <source>
        <strain>168</strain>
    </source>
</reference>
<reference key="3">
    <citation type="journal article" date="1997" name="Nature">
        <title>The complete genome sequence of the Gram-positive bacterium Bacillus subtilis.</title>
        <authorList>
            <person name="Kunst F."/>
            <person name="Ogasawara N."/>
            <person name="Moszer I."/>
            <person name="Albertini A.M."/>
            <person name="Alloni G."/>
            <person name="Azevedo V."/>
            <person name="Bertero M.G."/>
            <person name="Bessieres P."/>
            <person name="Bolotin A."/>
            <person name="Borchert S."/>
            <person name="Borriss R."/>
            <person name="Boursier L."/>
            <person name="Brans A."/>
            <person name="Braun M."/>
            <person name="Brignell S.C."/>
            <person name="Bron S."/>
            <person name="Brouillet S."/>
            <person name="Bruschi C.V."/>
            <person name="Caldwell B."/>
            <person name="Capuano V."/>
            <person name="Carter N.M."/>
            <person name="Choi S.-K."/>
            <person name="Codani J.-J."/>
            <person name="Connerton I.F."/>
            <person name="Cummings N.J."/>
            <person name="Daniel R.A."/>
            <person name="Denizot F."/>
            <person name="Devine K.M."/>
            <person name="Duesterhoeft A."/>
            <person name="Ehrlich S.D."/>
            <person name="Emmerson P.T."/>
            <person name="Entian K.-D."/>
            <person name="Errington J."/>
            <person name="Fabret C."/>
            <person name="Ferrari E."/>
            <person name="Foulger D."/>
            <person name="Fritz C."/>
            <person name="Fujita M."/>
            <person name="Fujita Y."/>
            <person name="Fuma S."/>
            <person name="Galizzi A."/>
            <person name="Galleron N."/>
            <person name="Ghim S.-Y."/>
            <person name="Glaser P."/>
            <person name="Goffeau A."/>
            <person name="Golightly E.J."/>
            <person name="Grandi G."/>
            <person name="Guiseppi G."/>
            <person name="Guy B.J."/>
            <person name="Haga K."/>
            <person name="Haiech J."/>
            <person name="Harwood C.R."/>
            <person name="Henaut A."/>
            <person name="Hilbert H."/>
            <person name="Holsappel S."/>
            <person name="Hosono S."/>
            <person name="Hullo M.-F."/>
            <person name="Itaya M."/>
            <person name="Jones L.-M."/>
            <person name="Joris B."/>
            <person name="Karamata D."/>
            <person name="Kasahara Y."/>
            <person name="Klaerr-Blanchard M."/>
            <person name="Klein C."/>
            <person name="Kobayashi Y."/>
            <person name="Koetter P."/>
            <person name="Koningstein G."/>
            <person name="Krogh S."/>
            <person name="Kumano M."/>
            <person name="Kurita K."/>
            <person name="Lapidus A."/>
            <person name="Lardinois S."/>
            <person name="Lauber J."/>
            <person name="Lazarevic V."/>
            <person name="Lee S.-M."/>
            <person name="Levine A."/>
            <person name="Liu H."/>
            <person name="Masuda S."/>
            <person name="Mauel C."/>
            <person name="Medigue C."/>
            <person name="Medina N."/>
            <person name="Mellado R.P."/>
            <person name="Mizuno M."/>
            <person name="Moestl D."/>
            <person name="Nakai S."/>
            <person name="Noback M."/>
            <person name="Noone D."/>
            <person name="O'Reilly M."/>
            <person name="Ogawa K."/>
            <person name="Ogiwara A."/>
            <person name="Oudega B."/>
            <person name="Park S.-H."/>
            <person name="Parro V."/>
            <person name="Pohl T.M."/>
            <person name="Portetelle D."/>
            <person name="Porwollik S."/>
            <person name="Prescott A.M."/>
            <person name="Presecan E."/>
            <person name="Pujic P."/>
            <person name="Purnelle B."/>
            <person name="Rapoport G."/>
            <person name="Rey M."/>
            <person name="Reynolds S."/>
            <person name="Rieger M."/>
            <person name="Rivolta C."/>
            <person name="Rocha E."/>
            <person name="Roche B."/>
            <person name="Rose M."/>
            <person name="Sadaie Y."/>
            <person name="Sato T."/>
            <person name="Scanlan E."/>
            <person name="Schleich S."/>
            <person name="Schroeter R."/>
            <person name="Scoffone F."/>
            <person name="Sekiguchi J."/>
            <person name="Sekowska A."/>
            <person name="Seror S.J."/>
            <person name="Serror P."/>
            <person name="Shin B.-S."/>
            <person name="Soldo B."/>
            <person name="Sorokin A."/>
            <person name="Tacconi E."/>
            <person name="Takagi T."/>
            <person name="Takahashi H."/>
            <person name="Takemaru K."/>
            <person name="Takeuchi M."/>
            <person name="Tamakoshi A."/>
            <person name="Tanaka T."/>
            <person name="Terpstra P."/>
            <person name="Tognoni A."/>
            <person name="Tosato V."/>
            <person name="Uchiyama S."/>
            <person name="Vandenbol M."/>
            <person name="Vannier F."/>
            <person name="Vassarotti A."/>
            <person name="Viari A."/>
            <person name="Wambutt R."/>
            <person name="Wedler E."/>
            <person name="Wedler H."/>
            <person name="Weitzenegger T."/>
            <person name="Winters P."/>
            <person name="Wipat A."/>
            <person name="Yamamoto H."/>
            <person name="Yamane K."/>
            <person name="Yasumoto K."/>
            <person name="Yata K."/>
            <person name="Yoshida K."/>
            <person name="Yoshikawa H.-F."/>
            <person name="Zumstein E."/>
            <person name="Yoshikawa H."/>
            <person name="Danchin A."/>
        </authorList>
    </citation>
    <scope>NUCLEOTIDE SEQUENCE [LARGE SCALE GENOMIC DNA]</scope>
    <source>
        <strain>168</strain>
    </source>
</reference>
<reference key="4">
    <citation type="journal article" date="1994" name="J. Bacteriol.">
        <title>RocR, a novel regulatory protein controlling arginine utilization in Bacillus subtilis, belongs to the NtrC/NifA family of transcriptional activators.</title>
        <authorList>
            <person name="Calogero S."/>
            <person name="Gardan R."/>
            <person name="Glaser P."/>
            <person name="Schweitzer J."/>
            <person name="Rapoport G."/>
            <person name="Debarbouille M."/>
        </authorList>
    </citation>
    <scope>NUCLEOTIDE SEQUENCE [GENOMIC DNA] OF 1-70</scope>
    <source>
        <strain>168 / Marburg / ATCC 6051 / DSM 10 / JCM 1465 / NBRC 13719 / NCIMB 3610 / NRRL NRS-744 / VKM B-501</strain>
    </source>
</reference>
<reference key="5">
    <citation type="journal article" date="1979" name="J. Bacteriol.">
        <title>Carbon and nitrogen repression of arginine catabolic enzymes in Bacillus subtilis.</title>
        <authorList>
            <person name="Baumberg S."/>
            <person name="Harwood C.R."/>
        </authorList>
    </citation>
    <scope>INDUCTION</scope>
</reference>
<protein>
    <recommendedName>
        <fullName>Ornithine aminotransferase</fullName>
        <shortName>OAT</shortName>
        <ecNumber evidence="3">2.6.1.13</ecNumber>
    </recommendedName>
    <alternativeName>
        <fullName>Ornithine--oxo-acid aminotransferase</fullName>
    </alternativeName>
</protein>